<reference key="1">
    <citation type="journal article" date="2006" name="Mol. Biol. Evol.">
        <title>The chloroplast genome sequence of Chara vulgaris sheds new light into the closest green algal relatives of land plants.</title>
        <authorList>
            <person name="Turmel M."/>
            <person name="Otis C."/>
            <person name="Lemieux C."/>
        </authorList>
    </citation>
    <scope>NUCLEOTIDE SEQUENCE [LARGE SCALE GENOMIC DNA]</scope>
</reference>
<feature type="chain" id="PRO_0000276558" description="Photosystem II reaction center protein Psb30">
    <location>
        <begin position="1"/>
        <end position="33"/>
    </location>
</feature>
<feature type="transmembrane region" description="Helical" evidence="1">
    <location>
        <begin position="5"/>
        <end position="25"/>
    </location>
</feature>
<name>PSB30_CHAVU</name>
<keyword id="KW-0150">Chloroplast</keyword>
<keyword id="KW-0472">Membrane</keyword>
<keyword id="KW-0602">Photosynthesis</keyword>
<keyword id="KW-0604">Photosystem II</keyword>
<keyword id="KW-0934">Plastid</keyword>
<keyword id="KW-0793">Thylakoid</keyword>
<keyword id="KW-0812">Transmembrane</keyword>
<keyword id="KW-1133">Transmembrane helix</keyword>
<accession>Q1ACL9</accession>
<comment type="function">
    <text evidence="1">A core subunit of photosystem II (PSII), probably helps stabilize the reaction center.</text>
</comment>
<comment type="subunit">
    <text evidence="1">PSII is composed of 1 copy each of membrane proteins PsbA, PsbB, PsbC, PsbD, PsbE, PsbF, PsbH, PsbI, PsbJ, PsbK, PsbL, PsbM, PsbT, PsbX, PsbY, PsbZ, Psb30/Ycf12, peripheral proteins of the oxygen-evolving complex and a large number of cofactors. It forms dimeric complexes.</text>
</comment>
<comment type="subcellular location">
    <subcellularLocation>
        <location evidence="1">Plastid</location>
        <location evidence="1">Chloroplast thylakoid membrane</location>
        <topology evidence="1">Single-pass membrane protein</topology>
    </subcellularLocation>
</comment>
<comment type="similarity">
    <text evidence="1">Belongs to the Psb30/Ycf12 family.</text>
</comment>
<sequence>MSIEVIAQLASLALIIVLGPLVIGLLAARKGNL</sequence>
<organism>
    <name type="scientific">Chara vulgaris</name>
    <name type="common">Common stonewort</name>
    <dbReference type="NCBI Taxonomy" id="55564"/>
    <lineage>
        <taxon>Eukaryota</taxon>
        <taxon>Viridiplantae</taxon>
        <taxon>Streptophyta</taxon>
        <taxon>Charophyceae</taxon>
        <taxon>Charales</taxon>
        <taxon>Characeae</taxon>
        <taxon>Chara</taxon>
    </lineage>
</organism>
<geneLocation type="chloroplast"/>
<gene>
    <name evidence="1" type="primary">psb30</name>
    <name evidence="1" type="synonym">ycf12</name>
</gene>
<protein>
    <recommendedName>
        <fullName evidence="1">Photosystem II reaction center protein Psb30</fullName>
    </recommendedName>
    <alternativeName>
        <fullName evidence="1">Photosystem II reaction center protein Ycf12</fullName>
    </alternativeName>
</protein>
<proteinExistence type="inferred from homology"/>
<dbReference type="EMBL" id="DQ229107">
    <property type="protein sequence ID" value="ABA61971.1"/>
    <property type="molecule type" value="Genomic_DNA"/>
</dbReference>
<dbReference type="RefSeq" id="YP_635728.1">
    <property type="nucleotide sequence ID" value="NC_008097.1"/>
</dbReference>
<dbReference type="SMR" id="Q1ACL9"/>
<dbReference type="GeneID" id="4100342"/>
<dbReference type="GO" id="GO:0009535">
    <property type="term" value="C:chloroplast thylakoid membrane"/>
    <property type="evidence" value="ECO:0007669"/>
    <property type="project" value="UniProtKB-SubCell"/>
</dbReference>
<dbReference type="GO" id="GO:0009523">
    <property type="term" value="C:photosystem II"/>
    <property type="evidence" value="ECO:0007669"/>
    <property type="project" value="UniProtKB-KW"/>
</dbReference>
<dbReference type="GO" id="GO:0015979">
    <property type="term" value="P:photosynthesis"/>
    <property type="evidence" value="ECO:0007669"/>
    <property type="project" value="UniProtKB-KW"/>
</dbReference>
<dbReference type="HAMAP" id="MF_01329">
    <property type="entry name" value="PSII_Psb30_Ycf12"/>
    <property type="match status" value="1"/>
</dbReference>
<dbReference type="InterPro" id="IPR010284">
    <property type="entry name" value="PSII_Ycf12_core-subunit"/>
</dbReference>
<dbReference type="NCBIfam" id="NF010239">
    <property type="entry name" value="PRK13686.1"/>
    <property type="match status" value="1"/>
</dbReference>
<dbReference type="Pfam" id="PF05969">
    <property type="entry name" value="PSII_Ycf12"/>
    <property type="match status" value="1"/>
</dbReference>
<evidence type="ECO:0000255" key="1">
    <source>
        <dbReference type="HAMAP-Rule" id="MF_01329"/>
    </source>
</evidence>